<protein>
    <recommendedName>
        <fullName>DNA-directed RNA polymerase II subunit RPB1</fullName>
        <shortName>RNA polymerase II subunit B1</shortName>
        <ecNumber>2.7.7.6</ecNumber>
    </recommendedName>
    <alternativeName>
        <fullName>DNA-directed RNA polymerase III largest subunit</fullName>
    </alternativeName>
</protein>
<dbReference type="EC" id="2.7.7.6"/>
<dbReference type="EMBL" id="HE601337">
    <property type="protein sequence ID" value="CAP25847.3"/>
    <property type="molecule type" value="Genomic_DNA"/>
</dbReference>
<dbReference type="EMBL" id="L23763">
    <property type="protein sequence ID" value="AAA27891.1"/>
    <property type="status" value="ALT_FRAME"/>
    <property type="molecule type" value="Genomic_DNA"/>
</dbReference>
<dbReference type="SMR" id="P35074"/>
<dbReference type="FunCoup" id="P35074">
    <property type="interactions" value="2727"/>
</dbReference>
<dbReference type="STRING" id="6238.P35074"/>
<dbReference type="EnsemblMetazoa" id="CBG05355a.1">
    <property type="protein sequence ID" value="CBG05355a.1"/>
    <property type="gene ID" value="WBGene00027817"/>
</dbReference>
<dbReference type="KEGG" id="cbr:CBG_05355"/>
<dbReference type="CTD" id="8576752"/>
<dbReference type="WormBase" id="CBG05355a">
    <property type="protein sequence ID" value="CBP01350"/>
    <property type="gene ID" value="WBGene00027817"/>
    <property type="gene designation" value="Cbr-ama-1"/>
</dbReference>
<dbReference type="eggNOG" id="KOG0260">
    <property type="taxonomic scope" value="Eukaryota"/>
</dbReference>
<dbReference type="HOGENOM" id="CLU_000487_0_2_1"/>
<dbReference type="InParanoid" id="P35074"/>
<dbReference type="OMA" id="KPCMGIV"/>
<dbReference type="Proteomes" id="UP000008549">
    <property type="component" value="Unassembled WGS sequence"/>
</dbReference>
<dbReference type="GO" id="GO:0005694">
    <property type="term" value="C:chromosome"/>
    <property type="evidence" value="ECO:0007669"/>
    <property type="project" value="UniProtKB-SubCell"/>
</dbReference>
<dbReference type="GO" id="GO:0005739">
    <property type="term" value="C:mitochondrion"/>
    <property type="evidence" value="ECO:0007669"/>
    <property type="project" value="GOC"/>
</dbReference>
<dbReference type="GO" id="GO:0005665">
    <property type="term" value="C:RNA polymerase II, core complex"/>
    <property type="evidence" value="ECO:0000318"/>
    <property type="project" value="GO_Central"/>
</dbReference>
<dbReference type="GO" id="GO:0003677">
    <property type="term" value="F:DNA binding"/>
    <property type="evidence" value="ECO:0007669"/>
    <property type="project" value="UniProtKB-KW"/>
</dbReference>
<dbReference type="GO" id="GO:0003899">
    <property type="term" value="F:DNA-directed RNA polymerase activity"/>
    <property type="evidence" value="ECO:0007669"/>
    <property type="project" value="UniProtKB-EC"/>
</dbReference>
<dbReference type="GO" id="GO:0046872">
    <property type="term" value="F:metal ion binding"/>
    <property type="evidence" value="ECO:0007669"/>
    <property type="project" value="UniProtKB-KW"/>
</dbReference>
<dbReference type="GO" id="GO:0006366">
    <property type="term" value="P:transcription by RNA polymerase II"/>
    <property type="evidence" value="ECO:0007669"/>
    <property type="project" value="InterPro"/>
</dbReference>
<dbReference type="CDD" id="cd02584">
    <property type="entry name" value="RNAP_II_Rpb1_C"/>
    <property type="match status" value="1"/>
</dbReference>
<dbReference type="CDD" id="cd02733">
    <property type="entry name" value="RNAP_II_RPB1_N"/>
    <property type="match status" value="1"/>
</dbReference>
<dbReference type="FunFam" id="2.40.40.20:FF:000019">
    <property type="entry name" value="DNA-directed RNA polymerase II subunit RPB1"/>
    <property type="match status" value="1"/>
</dbReference>
<dbReference type="FunFam" id="1.10.132.30:FF:000001">
    <property type="entry name" value="DNA-directed RNA polymerase subunit"/>
    <property type="match status" value="1"/>
</dbReference>
<dbReference type="FunFam" id="1.10.150.390:FF:000001">
    <property type="entry name" value="DNA-directed RNA polymerase subunit"/>
    <property type="match status" value="1"/>
</dbReference>
<dbReference type="FunFam" id="1.10.274.100:FF:000001">
    <property type="entry name" value="DNA-directed RNA polymerase subunit"/>
    <property type="match status" value="1"/>
</dbReference>
<dbReference type="FunFam" id="3.30.1360.140:FF:000001">
    <property type="entry name" value="DNA-directed RNA polymerase subunit"/>
    <property type="match status" value="1"/>
</dbReference>
<dbReference type="FunFam" id="3.30.1490.180:FF:000001">
    <property type="entry name" value="DNA-directed RNA polymerase subunit"/>
    <property type="match status" value="1"/>
</dbReference>
<dbReference type="FunFam" id="4.10.860.120:FF:000005">
    <property type="entry name" value="DNA-directed RNA polymerase subunit"/>
    <property type="match status" value="1"/>
</dbReference>
<dbReference type="Gene3D" id="1.10.132.30">
    <property type="match status" value="1"/>
</dbReference>
<dbReference type="Gene3D" id="1.10.150.390">
    <property type="match status" value="1"/>
</dbReference>
<dbReference type="Gene3D" id="2.40.40.20">
    <property type="match status" value="1"/>
</dbReference>
<dbReference type="Gene3D" id="3.30.1360.140">
    <property type="match status" value="1"/>
</dbReference>
<dbReference type="Gene3D" id="6.10.250.2940">
    <property type="match status" value="1"/>
</dbReference>
<dbReference type="Gene3D" id="6.20.50.80">
    <property type="match status" value="1"/>
</dbReference>
<dbReference type="Gene3D" id="3.30.1490.180">
    <property type="entry name" value="RNA polymerase ii"/>
    <property type="match status" value="1"/>
</dbReference>
<dbReference type="Gene3D" id="4.10.860.120">
    <property type="entry name" value="RNA polymerase II, clamp domain"/>
    <property type="match status" value="2"/>
</dbReference>
<dbReference type="Gene3D" id="1.10.274.100">
    <property type="entry name" value="RNA polymerase Rpb1, domain 3"/>
    <property type="match status" value="1"/>
</dbReference>
<dbReference type="InterPro" id="IPR045867">
    <property type="entry name" value="DNA-dir_RpoC_beta_prime"/>
</dbReference>
<dbReference type="InterPro" id="IPR000722">
    <property type="entry name" value="RNA_pol_asu"/>
</dbReference>
<dbReference type="InterPro" id="IPR000684">
    <property type="entry name" value="RNA_pol_II_repeat_euk"/>
</dbReference>
<dbReference type="InterPro" id="IPR006592">
    <property type="entry name" value="RNA_pol_N"/>
</dbReference>
<dbReference type="InterPro" id="IPR007080">
    <property type="entry name" value="RNA_pol_Rpb1_1"/>
</dbReference>
<dbReference type="InterPro" id="IPR007066">
    <property type="entry name" value="RNA_pol_Rpb1_3"/>
</dbReference>
<dbReference type="InterPro" id="IPR042102">
    <property type="entry name" value="RNA_pol_Rpb1_3_sf"/>
</dbReference>
<dbReference type="InterPro" id="IPR007083">
    <property type="entry name" value="RNA_pol_Rpb1_4"/>
</dbReference>
<dbReference type="InterPro" id="IPR007081">
    <property type="entry name" value="RNA_pol_Rpb1_5"/>
</dbReference>
<dbReference type="InterPro" id="IPR007075">
    <property type="entry name" value="RNA_pol_Rpb1_6"/>
</dbReference>
<dbReference type="InterPro" id="IPR007073">
    <property type="entry name" value="RNA_pol_Rpb1_7"/>
</dbReference>
<dbReference type="InterPro" id="IPR038593">
    <property type="entry name" value="RNA_pol_Rpb1_7_sf"/>
</dbReference>
<dbReference type="InterPro" id="IPR044893">
    <property type="entry name" value="RNA_pol_Rpb1_clamp_domain"/>
</dbReference>
<dbReference type="InterPro" id="IPR038120">
    <property type="entry name" value="Rpb1_funnel_sf"/>
</dbReference>
<dbReference type="NCBIfam" id="NF006336">
    <property type="entry name" value="PRK08566.1"/>
    <property type="match status" value="1"/>
</dbReference>
<dbReference type="PANTHER" id="PTHR19376">
    <property type="entry name" value="DNA-DIRECTED RNA POLYMERASE"/>
    <property type="match status" value="1"/>
</dbReference>
<dbReference type="PANTHER" id="PTHR19376:SF37">
    <property type="entry name" value="DNA-DIRECTED RNA POLYMERASE II SUBUNIT RPB1"/>
    <property type="match status" value="1"/>
</dbReference>
<dbReference type="Pfam" id="PF04997">
    <property type="entry name" value="RNA_pol_Rpb1_1"/>
    <property type="match status" value="1"/>
</dbReference>
<dbReference type="Pfam" id="PF00623">
    <property type="entry name" value="RNA_pol_Rpb1_2"/>
    <property type="match status" value="1"/>
</dbReference>
<dbReference type="Pfam" id="PF04983">
    <property type="entry name" value="RNA_pol_Rpb1_3"/>
    <property type="match status" value="1"/>
</dbReference>
<dbReference type="Pfam" id="PF05000">
    <property type="entry name" value="RNA_pol_Rpb1_4"/>
    <property type="match status" value="1"/>
</dbReference>
<dbReference type="Pfam" id="PF04998">
    <property type="entry name" value="RNA_pol_Rpb1_5"/>
    <property type="match status" value="1"/>
</dbReference>
<dbReference type="Pfam" id="PF04992">
    <property type="entry name" value="RNA_pol_Rpb1_6"/>
    <property type="match status" value="1"/>
</dbReference>
<dbReference type="Pfam" id="PF04990">
    <property type="entry name" value="RNA_pol_Rpb1_7"/>
    <property type="match status" value="1"/>
</dbReference>
<dbReference type="Pfam" id="PF05001">
    <property type="entry name" value="RNA_pol_Rpb1_R"/>
    <property type="match status" value="23"/>
</dbReference>
<dbReference type="PRINTS" id="PR01217">
    <property type="entry name" value="PRICHEXTENSN"/>
</dbReference>
<dbReference type="SMART" id="SM00663">
    <property type="entry name" value="RPOLA_N"/>
    <property type="match status" value="1"/>
</dbReference>
<dbReference type="SUPFAM" id="SSF64484">
    <property type="entry name" value="beta and beta-prime subunits of DNA dependent RNA-polymerase"/>
    <property type="match status" value="1"/>
</dbReference>
<dbReference type="PROSITE" id="PS00115">
    <property type="entry name" value="RNA_POL_II_REPEAT"/>
    <property type="match status" value="26"/>
</dbReference>
<gene>
    <name evidence="7" type="primary">ama-1</name>
    <name evidence="7" type="synonym">rpb-1</name>
    <name evidence="7" type="ORF">CBG05355</name>
</gene>
<comment type="function">
    <text evidence="3 4">DNA-dependent RNA polymerase catalyzes the transcription of DNA into RNA using the four ribonucleoside triphosphates as substrates. Largest and catalytic component of RNA polymerase II which synthesizes mRNA precursors and many functional non-coding RNAs. Forms the polymerase active center together with the second largest subunit. Pol II is the central component of the basal RNA polymerase II transcription machinery. It is composed of mobile elements that move relative to each other. RPB1 is part of the core element with the central large cleft, the clamp element that moves to open and close the cleft and the jaws that are thought to grab the incoming DNA template. At the start of transcription, a single-stranded DNA template strand of the promoter is positioned within the central active site cleft of Pol II. A bridging helix emanates from RPB1 and crosses the cleft near the catalytic site and is thought to promote translocation of Pol II by acting as a ratchet that moves the RNA-DNA hybrid through the active site by switching from straight to bent conformations at each step of nucleotide addition. During transcription elongation, Pol II moves on the template as the transcript elongates. Elongation is influenced by the phosphorylation status of the C-terminal domain (CTD) of Pol II largest subunit (RPB1), which serves as a platform for assembly of factors that regulate transcription initiation, elongation, termination and mRNA processing. Involved in the transcription of several genes including those involved in embryogenesis.</text>
</comment>
<comment type="catalytic activity">
    <reaction>
        <text>RNA(n) + a ribonucleoside 5'-triphosphate = RNA(n+1) + diphosphate</text>
        <dbReference type="Rhea" id="RHEA:21248"/>
        <dbReference type="Rhea" id="RHEA-COMP:14527"/>
        <dbReference type="Rhea" id="RHEA-COMP:17342"/>
        <dbReference type="ChEBI" id="CHEBI:33019"/>
        <dbReference type="ChEBI" id="CHEBI:61557"/>
        <dbReference type="ChEBI" id="CHEBI:140395"/>
        <dbReference type="EC" id="2.7.7.6"/>
    </reaction>
</comment>
<comment type="subunit">
    <text evidence="3 4">Component of the RNA polymerase II (Pol II) complex consisting of 12 subunits. Interacts with sig-7.</text>
</comment>
<comment type="subcellular location">
    <subcellularLocation>
        <location evidence="3">Nucleus</location>
    </subcellularLocation>
    <subcellularLocation>
        <location evidence="3">Chromosome</location>
    </subcellularLocation>
    <text evidence="3">Localizes to punctate nucleoplasmic structures in the nuclei of interphase somatic cells when phosphorylated at 'Ser-5' of the C-terminal heptapeptide repeat. A similar localization occurs in early developing oocytes when phosphorylated at 'Ser-2' and 'Ser-5' of the C-terminal heptapeptide repeat. Localizes to the nucleus of embryonic somatic and germline cells when phosphorylated at 'Ser-2' of the C-terminal heptapeptide repeat. Localizes to two discrete foci in the transcriptionally silent germ line nucleus. Co-localizes with transcriptionally active chromatin in all autosomes of mitotic and meiotic nuclei in germ cells.</text>
</comment>
<comment type="domain">
    <text evidence="6">The C-terminal domain (CTD) serves as a platform for assembly of factors that regulate transcription initiation, elongation, termination and mRNA processing.</text>
</comment>
<comment type="PTM">
    <text evidence="3 4">The tandem 7 residues repeats in the C-terminal domain (CTD) can be highly phosphorylated. The phosphorylation activates Pol II. Phosphorylation occurs mainly at residues 'Ser-2' and 'Ser-5' of the heptapeptide repeat and starts at the 3- to 4-cell embryonic stage. This phosphorylation also occurs in the early stages of oocyte development and is not detected in oocytes arrested at the meiotic diakinesis stage. In the somatic lineage, phosphorylation at 'Ser-2' is mediated by cdk-12 downstream of cdk-9 whereas in the germline lineage cdk-12 phosphorylates 'Ser-2' independently of cdk-9. Phosphorylation is likely mediated by cdk-7. May be dephosphorylated by fcp-1 in diakinetic oocytes and in 1-cell and 2-cell embryos. Dephosphorylated at 'Ser-5' of the heptapeptide repeat by ssup-72. The phosphorylation state is believed to result from the balanced action of site-specific CTD kinases and phosphatase, and a 'CTD code' that specifies the position of Pol II within the transcription cycle has been proposed.</text>
</comment>
<comment type="PTM">
    <text evidence="2">Following transcription stress, the elongating form of RNA polymerase II (RNA pol IIo) is polyubiquitinated via 'Lys-63'-linkages on Lys-1260 at DNA damage sites without leading to degradation: ubiquitination promotes RNA pol IIo backtracking to allow access by the transcription-coupled nucleotide excision repair (TC-NER) machinery. Subsequent DEF1-dependent polyubiquitination by the elongin complex via 'Lys-48'-linkages may lead to proteasome-mediated degradation; presumably at stalled RNA pol II where TC-NER has failed, to halt global transcription and enable 'last resort' DNA repair pathways.</text>
</comment>
<comment type="miscellaneous">
    <text>The binding of ribonucleoside triphosphate to the RNA polymerase II transcribing complex probably involves a two-step mechanism. The initial binding seems to occur at the entry (E) site and involves a magnesium ion temporarily coordinated by three conserved aspartate residues of the two largest RNA Pol II subunits. The ribonucleoside triphosphate is transferred by a rotation to the nucleotide addition (A) site for pairing with the template DNA. The catalytic A site involves three conserved aspartate residues of the RNA Pol II largest subunit which permanently coordinate a second magnesium ion.</text>
</comment>
<comment type="similarity">
    <text evidence="6">Belongs to the RNA polymerase beta' chain family.</text>
</comment>
<comment type="sequence caution" evidence="6">
    <conflict type="frameshift">
        <sequence resource="EMBL-CDS" id="AAA27891"/>
    </conflict>
</comment>
<name>RPB1_CAEBR</name>
<keyword id="KW-0158">Chromosome</keyword>
<keyword id="KW-0238">DNA-binding</keyword>
<keyword id="KW-0240">DNA-directed RNA polymerase</keyword>
<keyword id="KW-1017">Isopeptide bond</keyword>
<keyword id="KW-0460">Magnesium</keyword>
<keyword id="KW-0479">Metal-binding</keyword>
<keyword id="KW-0548">Nucleotidyltransferase</keyword>
<keyword id="KW-0539">Nucleus</keyword>
<keyword id="KW-0597">Phosphoprotein</keyword>
<keyword id="KW-1185">Reference proteome</keyword>
<keyword id="KW-0677">Repeat</keyword>
<keyword id="KW-0804">Transcription</keyword>
<keyword id="KW-0808">Transferase</keyword>
<keyword id="KW-0832">Ubl conjugation</keyword>
<keyword id="KW-0862">Zinc</keyword>
<evidence type="ECO:0000250" key="1"/>
<evidence type="ECO:0000250" key="2">
    <source>
        <dbReference type="UniProtKB" id="P04050"/>
    </source>
</evidence>
<evidence type="ECO:0000250" key="3">
    <source>
        <dbReference type="UniProtKB" id="P16356"/>
    </source>
</evidence>
<evidence type="ECO:0000250" key="4">
    <source>
        <dbReference type="UniProtKB" id="P24928"/>
    </source>
</evidence>
<evidence type="ECO:0000256" key="5">
    <source>
        <dbReference type="SAM" id="MobiDB-lite"/>
    </source>
</evidence>
<evidence type="ECO:0000305" key="6"/>
<evidence type="ECO:0000312" key="7">
    <source>
        <dbReference type="WormBase" id="CBG05355a"/>
    </source>
</evidence>
<sequence length="1853" mass="204442">MALVGVDFQAPLRTVCRVQFGILGPEEIKRMSVAHVEFPEVYENGKPKMGGLMDPRQGVIDRRGRCMTCAGNLTDCPGHFGHLELAKPVFHIGFLTKSLKILRCVCFYCGRLLIDKTNPRVMDILKKTSGNPKKRLALIYDLCKSKSVCEGAAEKEDGLPDDMDDPMNEGKKVPAGCGRYQPSYRRVGIDINAEWKKNVNEDTQERKIMLTAERVLEVFKQITDEDILVIGMDPQFARPEWMICTVLPVPPLAVRPAVVTFGSAKNQDDLTHKLSDIIKTNQQLQRNEANGAAAHVLTDDVRLLQYHVATLVDNCIPGLPTATQKGGRPLKSIKQRLKGKEGRIRGNLMGKRVDFSARTVITADPNLPIDTVGVPRTIAQNLTFPEIVTPFNVDKLQELVNRGDTQYPGAKYIIRENGARVDLRYHPRAADLHLQPGYRVERHMKDGDIIVFNRQPTLHKMSMMGHRVKILPWSTFRMNLSVTSPYNADFDGDEMNLHLPQSLETRAEIEEIAMVPRQLITPQANKPVMGIVQDTLCAVRMMTKRDIFIDWPFMMDLLMYLPTWDGKVPQPAILKPKPLWTGKQVFSLIIPGNVNVLRTHSTHPDSEDSGPYKWISPGDTKVLIEHGELLSGIVCSKTVGKSAGNLLHVVALELGHEIAANFYSHIQTVINAWLLREGHTIGIGDTIADQSTYLDIQNTIRKAKQDVVDVIEKAHNDDLEPTPGNTLRQTFENKVNQILNDARDRTGSSAQKSLSEFNNFKSMVVSGSKGSKINISQVIACVGQQNVEGKRIPFGFRHRTLPHFIKDDYGPESKGFVENSYLAGLTPSEFFFHAMGGREGLIDTAVKTAETGYIQRRLIKAMESVMVNYDGTVRNSLAQMVQLRYGEDGLDGMWVENQNMPTMKPNNAVFERDFRMDLTDNKFLRKNYSEDVVREIQEAQDGISLVESEWSQLEEDRRLLRKIFPRGDAKIVLPCNLQRLIWNAQKIFKVDLRKPVNLSPLHVINGVRELSKKLIIVSGNDEISKQAQYNATLLMNILLRSTLCTKKMCTSAKLNTEAFDWLLGEIETRFQQAIAQPGEMVGALAAQSLGEPATQMTLNTFHYAGVSAKNVTLGVPRLKEIINVSKQLKTPSLTVFLTGAAAKDPEKAKDVLCKLEHTTLKKVTCNTAIYYDPDPKNTVIAEDEEWVSIFYEMPDHDLTRTSPWLLRIELDRKRMVDKKLTMEMIADRIHGGFGQDVHTIYTDDNAEKLVFRLRIAGEDKGAEGQEEQVDKMEDDVFLRCIEANMLSDLTLQGIPAISKVYMNQPNTDDKKRIIITPEGGFKAVADWILETDGTALLRVLSERQIDPVRTTSNDICEIFEVLGIEAVRKSIEKEMDNVISFDGSYVNYRHLALLCDVMTAKGHLMAITRHGINRQEVGALMRCSFEETVDILMEASVHAEVDPVKGVSENIMLGQLARCGTGCFDLVLDVEKCKHGMEIPQNVVMGAGIYGGGFAGSPSREFSPAHSPWNSGVTPNYSGPWSPTGGMSPSAGFSPAGNLDGGASPFNEGGWSPASPGDPLGALSPRTPAYGGMSPGVYSPASPGFSMTSPHYSPTSPSYSPTSPAHHGQSPVSPSYSPTSPSYSPTSPSYSPTSPSYSPTSPSYSPTSPSYSPTSPSYSPTSPSYSPTSPSYSPSSPRYSPTSPTYSPTSPTYSPTSPTYSPTSPTYSPTSPSYEGYSPSSPKYSPSSPTYSPTSPSYSPTSPQYSPTSPQYSPSSPTYTPSSPTYNPTSPRAFSSPQYSPTSPTYSPTSPSYTPSSPQYSPTSPTYTPSPADQPGTSNQYSPSSPTYSPSSPTYSPASPSYSPSSPTYDPQN</sequence>
<feature type="chain" id="PRO_0000073934" description="DNA-directed RNA polymerase II subunit RPB1">
    <location>
        <begin position="1"/>
        <end position="1853"/>
    </location>
</feature>
<feature type="repeat" description="1">
    <location>
        <begin position="1592"/>
        <end position="1598"/>
    </location>
</feature>
<feature type="repeat" description="2">
    <location>
        <begin position="1599"/>
        <end position="1605"/>
    </location>
</feature>
<feature type="repeat" description="3">
    <location>
        <begin position="1616"/>
        <end position="1622"/>
    </location>
</feature>
<feature type="repeat" description="4">
    <location>
        <begin position="1623"/>
        <end position="1629"/>
    </location>
</feature>
<feature type="repeat" description="5">
    <location>
        <begin position="1630"/>
        <end position="1636"/>
    </location>
</feature>
<feature type="repeat" description="6">
    <location>
        <begin position="1637"/>
        <end position="1643"/>
    </location>
</feature>
<feature type="repeat" description="7">
    <location>
        <begin position="1644"/>
        <end position="1650"/>
    </location>
</feature>
<feature type="repeat" description="8">
    <location>
        <begin position="1651"/>
        <end position="1657"/>
    </location>
</feature>
<feature type="repeat" description="9">
    <location>
        <begin position="1658"/>
        <end position="1664"/>
    </location>
</feature>
<feature type="repeat" description="10">
    <location>
        <begin position="1665"/>
        <end position="1671"/>
    </location>
</feature>
<feature type="repeat" description="11">
    <location>
        <begin position="1679"/>
        <end position="1685"/>
    </location>
</feature>
<feature type="repeat" description="12">
    <location>
        <begin position="1686"/>
        <end position="1692"/>
    </location>
</feature>
<feature type="repeat" description="13">
    <location>
        <begin position="1693"/>
        <end position="1699"/>
    </location>
</feature>
<feature type="repeat" description="14">
    <location>
        <begin position="1700"/>
        <end position="1706"/>
    </location>
</feature>
<feature type="repeat" description="15">
    <location>
        <begin position="1707"/>
        <end position="1713"/>
    </location>
</feature>
<feature type="repeat" description="16">
    <location>
        <begin position="1717"/>
        <end position="1723"/>
    </location>
</feature>
<feature type="repeat" description="17">
    <location>
        <begin position="1724"/>
        <end position="1730"/>
    </location>
</feature>
<feature type="repeat" description="18">
    <location>
        <begin position="1731"/>
        <end position="1737"/>
    </location>
</feature>
<feature type="repeat" description="19">
    <location>
        <begin position="1752"/>
        <end position="1758"/>
    </location>
</feature>
<feature type="repeat" description="20">
    <location>
        <begin position="1759"/>
        <end position="1765"/>
    </location>
</feature>
<feature type="repeat" description="21">
    <location>
        <begin position="1779"/>
        <end position="1785"/>
    </location>
</feature>
<feature type="repeat" description="22">
    <location>
        <begin position="1786"/>
        <end position="1792"/>
    </location>
</feature>
<feature type="repeat" description="23">
    <location>
        <begin position="1800"/>
        <end position="1806"/>
    </location>
</feature>
<feature type="repeat" description="24">
    <location>
        <begin position="1821"/>
        <end position="1827"/>
    </location>
</feature>
<feature type="repeat" description="25">
    <location>
        <begin position="1828"/>
        <end position="1834"/>
    </location>
</feature>
<feature type="repeat" description="26">
    <location>
        <begin position="1842"/>
        <end position="1848"/>
    </location>
</feature>
<feature type="region of interest" description="Lid loop" evidence="1">
    <location>
        <begin position="256"/>
        <end position="268"/>
    </location>
</feature>
<feature type="region of interest" description="Rudder loop" evidence="1">
    <location>
        <begin position="314"/>
        <end position="331"/>
    </location>
</feature>
<feature type="region of interest" description="Bridging helix">
    <location>
        <begin position="827"/>
        <end position="839"/>
    </location>
</feature>
<feature type="region of interest" description="Disordered" evidence="5">
    <location>
        <begin position="1520"/>
        <end position="1568"/>
    </location>
</feature>
<feature type="region of interest" description="Disordered" evidence="5">
    <location>
        <begin position="1589"/>
        <end position="1853"/>
    </location>
</feature>
<feature type="region of interest" description="C-terminal domain (CTD); 26 X 7 AA approximate tandem repeats of Y-[ST]-P-[ST]-S-P-[AGKNQRST]">
    <location>
        <begin position="1592"/>
        <end position="1848"/>
    </location>
</feature>
<feature type="compositionally biased region" description="Low complexity" evidence="5">
    <location>
        <begin position="1589"/>
        <end position="1811"/>
    </location>
</feature>
<feature type="compositionally biased region" description="Low complexity" evidence="5">
    <location>
        <begin position="1821"/>
        <end position="1853"/>
    </location>
</feature>
<feature type="binding site" evidence="2">
    <location>
        <position position="66"/>
    </location>
    <ligand>
        <name>Zn(2+)</name>
        <dbReference type="ChEBI" id="CHEBI:29105"/>
        <label>1</label>
    </ligand>
</feature>
<feature type="binding site" evidence="2">
    <location>
        <position position="69"/>
    </location>
    <ligand>
        <name>Zn(2+)</name>
        <dbReference type="ChEBI" id="CHEBI:29105"/>
        <label>1</label>
    </ligand>
</feature>
<feature type="binding site" evidence="2">
    <location>
        <position position="76"/>
    </location>
    <ligand>
        <name>Zn(2+)</name>
        <dbReference type="ChEBI" id="CHEBI:29105"/>
        <label>1</label>
    </ligand>
</feature>
<feature type="binding site" evidence="2">
    <location>
        <position position="79"/>
    </location>
    <ligand>
        <name>Zn(2+)</name>
        <dbReference type="ChEBI" id="CHEBI:29105"/>
        <label>1</label>
    </ligand>
</feature>
<feature type="binding site" evidence="2">
    <location>
        <position position="106"/>
    </location>
    <ligand>
        <name>Zn(2+)</name>
        <dbReference type="ChEBI" id="CHEBI:29105"/>
        <label>2</label>
    </ligand>
</feature>
<feature type="binding site" evidence="2">
    <location>
        <position position="109"/>
    </location>
    <ligand>
        <name>Zn(2+)</name>
        <dbReference type="ChEBI" id="CHEBI:29105"/>
        <label>2</label>
    </ligand>
</feature>
<feature type="binding site" evidence="2">
    <location>
        <position position="149"/>
    </location>
    <ligand>
        <name>Zn(2+)</name>
        <dbReference type="ChEBI" id="CHEBI:29105"/>
        <label>2</label>
    </ligand>
</feature>
<feature type="binding site" evidence="2">
    <location>
        <position position="177"/>
    </location>
    <ligand>
        <name>Zn(2+)</name>
        <dbReference type="ChEBI" id="CHEBI:29105"/>
        <label>2</label>
    </ligand>
</feature>
<feature type="binding site" evidence="2">
    <location>
        <position position="489"/>
    </location>
    <ligand>
        <name>Mg(2+)</name>
        <dbReference type="ChEBI" id="CHEBI:18420"/>
        <label>1</label>
        <note>catalytic</note>
    </ligand>
</feature>
<feature type="binding site" evidence="2">
    <location>
        <position position="489"/>
    </location>
    <ligand>
        <name>Mg(2+)</name>
        <dbReference type="ChEBI" id="CHEBI:18420"/>
        <label>2</label>
        <note>ligand shared with RPB2</note>
    </ligand>
</feature>
<feature type="binding site" evidence="2">
    <location>
        <position position="491"/>
    </location>
    <ligand>
        <name>Mg(2+)</name>
        <dbReference type="ChEBI" id="CHEBI:18420"/>
        <label>1</label>
        <note>catalytic</note>
    </ligand>
</feature>
<feature type="binding site" evidence="2">
    <location>
        <position position="491"/>
    </location>
    <ligand>
        <name>Mg(2+)</name>
        <dbReference type="ChEBI" id="CHEBI:18420"/>
        <label>2</label>
        <note>ligand shared with RPB2</note>
    </ligand>
</feature>
<feature type="binding site" evidence="2">
    <location>
        <position position="493"/>
    </location>
    <ligand>
        <name>Mg(2+)</name>
        <dbReference type="ChEBI" id="CHEBI:18420"/>
        <label>1</label>
        <note>catalytic</note>
    </ligand>
</feature>
<feature type="cross-link" description="Glycyl lysine isopeptide (Lys-Gly) (interchain with G-Cter in ubiquitin)" evidence="2">
    <location>
        <position position="1260"/>
    </location>
</feature>
<feature type="sequence conflict" description="In Ref. 2; AAA27891." evidence="6" ref="2">
    <original>I</original>
    <variation>F</variation>
    <location>
        <position position="22"/>
    </location>
</feature>
<organism>
    <name type="scientific">Caenorhabditis briggsae</name>
    <dbReference type="NCBI Taxonomy" id="6238"/>
    <lineage>
        <taxon>Eukaryota</taxon>
        <taxon>Metazoa</taxon>
        <taxon>Ecdysozoa</taxon>
        <taxon>Nematoda</taxon>
        <taxon>Chromadorea</taxon>
        <taxon>Rhabditida</taxon>
        <taxon>Rhabditina</taxon>
        <taxon>Rhabditomorpha</taxon>
        <taxon>Rhabditoidea</taxon>
        <taxon>Rhabditidae</taxon>
        <taxon>Peloderinae</taxon>
        <taxon>Caenorhabditis</taxon>
    </lineage>
</organism>
<accession>P35074</accession>
<accession>A8WZN7</accession>
<accession>Q61UE8</accession>
<proteinExistence type="inferred from homology"/>
<reference key="1">
    <citation type="journal article" date="2003" name="PLoS Biol.">
        <title>The genome sequence of Caenorhabditis briggsae: a platform for comparative genomics.</title>
        <authorList>
            <person name="Stein L.D."/>
            <person name="Bao Z."/>
            <person name="Blasiar D."/>
            <person name="Blumenthal T."/>
            <person name="Brent M.R."/>
            <person name="Chen N."/>
            <person name="Chinwalla A."/>
            <person name="Clarke L."/>
            <person name="Clee C."/>
            <person name="Coghlan A."/>
            <person name="Coulson A."/>
            <person name="D'Eustachio P."/>
            <person name="Fitch D.H.A."/>
            <person name="Fulton L.A."/>
            <person name="Fulton R.E."/>
            <person name="Griffiths-Jones S."/>
            <person name="Harris T.W."/>
            <person name="Hillier L.W."/>
            <person name="Kamath R."/>
            <person name="Kuwabara P.E."/>
            <person name="Mardis E.R."/>
            <person name="Marra M.A."/>
            <person name="Miner T.L."/>
            <person name="Minx P."/>
            <person name="Mullikin J.C."/>
            <person name="Plumb R.W."/>
            <person name="Rogers J."/>
            <person name="Schein J.E."/>
            <person name="Sohrmann M."/>
            <person name="Spieth J."/>
            <person name="Stajich J.E."/>
            <person name="Wei C."/>
            <person name="Willey D."/>
            <person name="Wilson R.K."/>
            <person name="Durbin R.M."/>
            <person name="Waterston R.H."/>
        </authorList>
    </citation>
    <scope>NUCLEOTIDE SEQUENCE [LARGE SCALE GENOMIC DNA]</scope>
    <source>
        <strain>AF16</strain>
    </source>
</reference>
<reference key="2">
    <citation type="submission" date="1993-10" db="EMBL/GenBank/DDBJ databases">
        <title>Analysis of 5' flanking sequences from the Caenorhabditis elegans ama-1 gene.</title>
        <authorList>
            <person name="Bird D.M."/>
            <person name="Wilson M.A."/>
            <person name="Kaloshian I."/>
        </authorList>
    </citation>
    <scope>NUCLEOTIDE SEQUENCE [GENOMIC DNA] OF 1-66</scope>
</reference>